<feature type="chain" id="PRO_0000285310" description="DNA damage-inducible protein 1">
    <location>
        <begin position="1"/>
        <end position="444"/>
    </location>
</feature>
<feature type="domain" description="Ubiquitin-like" evidence="5">
    <location>
        <begin position="1"/>
        <end position="84"/>
    </location>
</feature>
<feature type="domain" description="UBA" evidence="4">
    <location>
        <begin position="404"/>
        <end position="444"/>
    </location>
</feature>
<feature type="region of interest" description="Disordered" evidence="6">
    <location>
        <begin position="85"/>
        <end position="110"/>
    </location>
</feature>
<feature type="region of interest" description="Disordered" evidence="6">
    <location>
        <begin position="339"/>
        <end position="404"/>
    </location>
</feature>
<feature type="compositionally biased region" description="Low complexity" evidence="6">
    <location>
        <begin position="85"/>
        <end position="103"/>
    </location>
</feature>
<feature type="compositionally biased region" description="Low complexity" evidence="6">
    <location>
        <begin position="368"/>
        <end position="404"/>
    </location>
</feature>
<feature type="active site" evidence="7">
    <location>
        <position position="230"/>
    </location>
</feature>
<proteinExistence type="inferred from homology"/>
<dbReference type="EC" id="3.4.23.-" evidence="2"/>
<dbReference type="EMBL" id="CH408032">
    <property type="protein sequence ID" value="EAQ88192.1"/>
    <property type="status" value="ALT_INIT"/>
    <property type="molecule type" value="Genomic_DNA"/>
</dbReference>
<dbReference type="RefSeq" id="XP_001224025.1">
    <property type="nucleotide sequence ID" value="XM_001224024.1"/>
</dbReference>
<dbReference type="SMR" id="Q2H085"/>
<dbReference type="FunCoup" id="Q2H085">
    <property type="interactions" value="252"/>
</dbReference>
<dbReference type="STRING" id="306901.Q2H085"/>
<dbReference type="GeneID" id="4392987"/>
<dbReference type="VEuPathDB" id="FungiDB:CHGG_04811"/>
<dbReference type="eggNOG" id="KOG0012">
    <property type="taxonomic scope" value="Eukaryota"/>
</dbReference>
<dbReference type="HOGENOM" id="CLU_020435_2_0_1"/>
<dbReference type="InParanoid" id="Q2H085"/>
<dbReference type="OrthoDB" id="1047367at2759"/>
<dbReference type="Proteomes" id="UP000001056">
    <property type="component" value="Unassembled WGS sequence"/>
</dbReference>
<dbReference type="GO" id="GO:0005737">
    <property type="term" value="C:cytoplasm"/>
    <property type="evidence" value="ECO:0007669"/>
    <property type="project" value="UniProtKB-SubCell"/>
</dbReference>
<dbReference type="GO" id="GO:0004190">
    <property type="term" value="F:aspartic-type endopeptidase activity"/>
    <property type="evidence" value="ECO:0007669"/>
    <property type="project" value="UniProtKB-KW"/>
</dbReference>
<dbReference type="GO" id="GO:0015031">
    <property type="term" value="P:protein transport"/>
    <property type="evidence" value="ECO:0007669"/>
    <property type="project" value="UniProtKB-KW"/>
</dbReference>
<dbReference type="GO" id="GO:0006508">
    <property type="term" value="P:proteolysis"/>
    <property type="evidence" value="ECO:0007669"/>
    <property type="project" value="UniProtKB-KW"/>
</dbReference>
<dbReference type="CDD" id="cd05479">
    <property type="entry name" value="RP_DDI"/>
    <property type="match status" value="1"/>
</dbReference>
<dbReference type="CDD" id="cd14309">
    <property type="entry name" value="UBA_scDdi1_like"/>
    <property type="match status" value="1"/>
</dbReference>
<dbReference type="CDD" id="cd01796">
    <property type="entry name" value="Ubl_Ddi1_like"/>
    <property type="match status" value="1"/>
</dbReference>
<dbReference type="Gene3D" id="2.40.70.10">
    <property type="entry name" value="Acid Proteases"/>
    <property type="match status" value="1"/>
</dbReference>
<dbReference type="Gene3D" id="1.10.8.10">
    <property type="entry name" value="DNA helicase RuvA subunit, C-terminal domain"/>
    <property type="match status" value="1"/>
</dbReference>
<dbReference type="Gene3D" id="3.10.20.90">
    <property type="entry name" value="Phosphatidylinositol 3-kinase Catalytic Subunit, Chain A, domain 1"/>
    <property type="match status" value="1"/>
</dbReference>
<dbReference type="InterPro" id="IPR001969">
    <property type="entry name" value="Aspartic_peptidase_AS"/>
</dbReference>
<dbReference type="InterPro" id="IPR033882">
    <property type="entry name" value="DDI1_N"/>
</dbReference>
<dbReference type="InterPro" id="IPR001995">
    <property type="entry name" value="Peptidase_A2_cat"/>
</dbReference>
<dbReference type="InterPro" id="IPR019103">
    <property type="entry name" value="Peptidase_aspartic_DDI1-type"/>
</dbReference>
<dbReference type="InterPro" id="IPR021109">
    <property type="entry name" value="Peptidase_aspartic_dom_sf"/>
</dbReference>
<dbReference type="InterPro" id="IPR015940">
    <property type="entry name" value="UBA"/>
</dbReference>
<dbReference type="InterPro" id="IPR009060">
    <property type="entry name" value="UBA-like_sf"/>
</dbReference>
<dbReference type="InterPro" id="IPR000626">
    <property type="entry name" value="Ubiquitin-like_dom"/>
</dbReference>
<dbReference type="InterPro" id="IPR029071">
    <property type="entry name" value="Ubiquitin-like_domsf"/>
</dbReference>
<dbReference type="PANTHER" id="PTHR15397:SF3">
    <property type="entry name" value="DNA DAMAGE INDUCIBLE 1 HOMOLOG 2"/>
    <property type="match status" value="1"/>
</dbReference>
<dbReference type="PANTHER" id="PTHR15397">
    <property type="entry name" value="SODIUM-GLUCOSE COTRANSPORTER REGULATORY PROTEIN -RELATED"/>
    <property type="match status" value="1"/>
</dbReference>
<dbReference type="Pfam" id="PF09668">
    <property type="entry name" value="Asp_protease"/>
    <property type="match status" value="1"/>
</dbReference>
<dbReference type="Pfam" id="PF00627">
    <property type="entry name" value="UBA"/>
    <property type="match status" value="1"/>
</dbReference>
<dbReference type="Pfam" id="PF00240">
    <property type="entry name" value="ubiquitin"/>
    <property type="match status" value="1"/>
</dbReference>
<dbReference type="SMART" id="SM00165">
    <property type="entry name" value="UBA"/>
    <property type="match status" value="1"/>
</dbReference>
<dbReference type="SMART" id="SM00213">
    <property type="entry name" value="UBQ"/>
    <property type="match status" value="1"/>
</dbReference>
<dbReference type="SUPFAM" id="SSF50630">
    <property type="entry name" value="Acid proteases"/>
    <property type="match status" value="1"/>
</dbReference>
<dbReference type="SUPFAM" id="SSF46934">
    <property type="entry name" value="UBA-like"/>
    <property type="match status" value="1"/>
</dbReference>
<dbReference type="SUPFAM" id="SSF54236">
    <property type="entry name" value="Ubiquitin-like"/>
    <property type="match status" value="1"/>
</dbReference>
<dbReference type="PROSITE" id="PS50030">
    <property type="entry name" value="UBA"/>
    <property type="match status" value="1"/>
</dbReference>
<dbReference type="PROSITE" id="PS50053">
    <property type="entry name" value="UBIQUITIN_2"/>
    <property type="match status" value="1"/>
</dbReference>
<reference key="1">
    <citation type="journal article" date="2015" name="Genome Announc.">
        <title>Draft genome sequence of the cellulolytic fungus Chaetomium globosum.</title>
        <authorList>
            <person name="Cuomo C.A."/>
            <person name="Untereiner W.A."/>
            <person name="Ma L.-J."/>
            <person name="Grabherr M."/>
            <person name="Birren B.W."/>
        </authorList>
    </citation>
    <scope>NUCLEOTIDE SEQUENCE [LARGE SCALE GENOMIC DNA]</scope>
    <source>
        <strain>ATCC 6205 / CBS 148.51 / DSM 1962 / NBRC 6347 / NRRL 1970</strain>
    </source>
</reference>
<comment type="function">
    <text evidence="2 3">Probable aspartic protease. May be involved in the regulation of exocytosis. Acts as a linker between the 19S proteasome and polyubiquitinated proteins via UBA domain interactions with ubiquitin for their subsequent degradation. Required for S-phase checkpoint control.</text>
</comment>
<comment type="subunit">
    <text evidence="1">Binds ubiquitin and polyubiquitinated proteins.</text>
</comment>
<comment type="subcellular location">
    <subcellularLocation>
        <location evidence="1">Cytoplasm</location>
    </subcellularLocation>
</comment>
<comment type="similarity">
    <text evidence="7">Belongs to the DDI1 family.</text>
</comment>
<comment type="sequence caution" evidence="7">
    <conflict type="erroneous initiation">
        <sequence resource="EMBL-CDS" id="EAQ88192"/>
    </conflict>
</comment>
<evidence type="ECO:0000250" key="1"/>
<evidence type="ECO:0000250" key="2">
    <source>
        <dbReference type="UniProtKB" id="I7HUG0"/>
    </source>
</evidence>
<evidence type="ECO:0000250" key="3">
    <source>
        <dbReference type="UniProtKB" id="P40087"/>
    </source>
</evidence>
<evidence type="ECO:0000255" key="4">
    <source>
        <dbReference type="PROSITE-ProRule" id="PRU00212"/>
    </source>
</evidence>
<evidence type="ECO:0000255" key="5">
    <source>
        <dbReference type="PROSITE-ProRule" id="PRU00214"/>
    </source>
</evidence>
<evidence type="ECO:0000256" key="6">
    <source>
        <dbReference type="SAM" id="MobiDB-lite"/>
    </source>
</evidence>
<evidence type="ECO:0000305" key="7"/>
<sequence>MRITLSITNSEPQGDDQELLSLEVYPEMTIETLRSSIQAETTHHPSAQHLYHNGQLVHDNAKTLGELGVTDGDMLALHIRDMRGSTTTPAAARAAPQSAARPAARPPPAQDPEVIRLQILGDPNLRGELGRSRPDLVAALEDPQRFARLFADSLDRERRERNERQRQIQLLNADPFDIDAQARIEEIIRQERVMENLQNAMEHNPEVFGTVHMLYLEVEVNGYKVKALVDSGAQATIMSPQCAEACGIMRLVDKRFSGIARGVGTANIIGRVHSAQIKIGPLFLPCSFTVMEGKQVEMLLGLDMLKRYQASIDLAKDKLIIQGVEVPFLGPADIPVETEEAVEREPTVPGPAGTTIGQRSGAVHAPSGQSGAAPAQRPQPGATPAPAAVAATPSSQPRAPAAPSFPREHIDQLVALGASEQRAIQALEATGGNVEYAASLIFQD</sequence>
<accession>Q2H085</accession>
<organism>
    <name type="scientific">Chaetomium globosum (strain ATCC 6205 / CBS 148.51 / DSM 1962 / NBRC 6347 / NRRL 1970)</name>
    <name type="common">Soil fungus</name>
    <dbReference type="NCBI Taxonomy" id="306901"/>
    <lineage>
        <taxon>Eukaryota</taxon>
        <taxon>Fungi</taxon>
        <taxon>Dikarya</taxon>
        <taxon>Ascomycota</taxon>
        <taxon>Pezizomycotina</taxon>
        <taxon>Sordariomycetes</taxon>
        <taxon>Sordariomycetidae</taxon>
        <taxon>Sordariales</taxon>
        <taxon>Chaetomiaceae</taxon>
        <taxon>Chaetomium</taxon>
    </lineage>
</organism>
<gene>
    <name type="primary">DDI1</name>
    <name type="ORF">CHGG_04811</name>
</gene>
<protein>
    <recommendedName>
        <fullName>DNA damage-inducible protein 1</fullName>
        <ecNumber evidence="2">3.4.23.-</ecNumber>
    </recommendedName>
</protein>
<name>DDI1_CHAGB</name>
<keyword id="KW-0064">Aspartyl protease</keyword>
<keyword id="KW-0963">Cytoplasm</keyword>
<keyword id="KW-0378">Hydrolase</keyword>
<keyword id="KW-0645">Protease</keyword>
<keyword id="KW-0653">Protein transport</keyword>
<keyword id="KW-1185">Reference proteome</keyword>
<keyword id="KW-0813">Transport</keyword>